<accession>Q05BQ1</accession>
<accession>Q8R1J8</accession>
<accession>Q925P4</accession>
<protein>
    <recommendedName>
        <fullName>Protein turtle homolog A</fullName>
    </recommendedName>
    <alternativeName>
        <fullName>Dendrite arborization and synapse maturation protein 1</fullName>
    </alternativeName>
    <alternativeName>
        <fullName>Immunoglobulin superfamily member 9A</fullName>
        <shortName>IgSF9A</shortName>
    </alternativeName>
</protein>
<name>TUTLA_MOUSE</name>
<gene>
    <name type="primary">Igsf9</name>
    <name type="synonym">Dasm1</name>
    <name type="synonym">Igsf9a</name>
    <name type="synonym">Nrt1</name>
</gene>
<evidence type="ECO:0000250" key="1"/>
<evidence type="ECO:0000250" key="2">
    <source>
        <dbReference type="UniProtKB" id="P0C5H6"/>
    </source>
</evidence>
<evidence type="ECO:0000255" key="3"/>
<evidence type="ECO:0000255" key="4">
    <source>
        <dbReference type="PROSITE-ProRule" id="PRU00114"/>
    </source>
</evidence>
<evidence type="ECO:0000255" key="5">
    <source>
        <dbReference type="PROSITE-ProRule" id="PRU00316"/>
    </source>
</evidence>
<evidence type="ECO:0000256" key="6">
    <source>
        <dbReference type="SAM" id="MobiDB-lite"/>
    </source>
</evidence>
<evidence type="ECO:0000269" key="7">
    <source>
    </source>
</evidence>
<evidence type="ECO:0000269" key="8">
    <source>
    </source>
</evidence>
<evidence type="ECO:0000269" key="9">
    <source>
    </source>
</evidence>
<evidence type="ECO:0000303" key="10">
    <source>
    </source>
</evidence>
<evidence type="ECO:0000305" key="11"/>
<keyword id="KW-0025">Alternative splicing</keyword>
<keyword id="KW-1003">Cell membrane</keyword>
<keyword id="KW-0217">Developmental protein</keyword>
<keyword id="KW-0221">Differentiation</keyword>
<keyword id="KW-1015">Disulfide bond</keyword>
<keyword id="KW-0325">Glycoprotein</keyword>
<keyword id="KW-0393">Immunoglobulin domain</keyword>
<keyword id="KW-0472">Membrane</keyword>
<keyword id="KW-0524">Neurogenesis</keyword>
<keyword id="KW-0597">Phosphoprotein</keyword>
<keyword id="KW-1185">Reference proteome</keyword>
<keyword id="KW-0677">Repeat</keyword>
<keyword id="KW-0732">Signal</keyword>
<keyword id="KW-0770">Synapse</keyword>
<keyword id="KW-0812">Transmembrane</keyword>
<keyword id="KW-1133">Transmembrane helix</keyword>
<feature type="signal peptide" evidence="3">
    <location>
        <begin position="1"/>
        <end position="20"/>
    </location>
</feature>
<feature type="chain" id="PRO_0000306108" description="Protein turtle homolog A">
    <location>
        <begin position="21"/>
        <end position="1179"/>
    </location>
</feature>
<feature type="topological domain" description="Extracellular" evidence="3">
    <location>
        <begin position="21"/>
        <end position="734"/>
    </location>
</feature>
<feature type="transmembrane region" description="Helical" evidence="3">
    <location>
        <begin position="735"/>
        <end position="755"/>
    </location>
</feature>
<feature type="topological domain" description="Cytoplasmic" evidence="3">
    <location>
        <begin position="756"/>
        <end position="1179"/>
    </location>
</feature>
<feature type="domain" description="Ig-like 1">
    <location>
        <begin position="24"/>
        <end position="124"/>
    </location>
</feature>
<feature type="domain" description="Ig-like 2">
    <location>
        <begin position="136"/>
        <end position="216"/>
    </location>
</feature>
<feature type="domain" description="Ig-like 3">
    <location>
        <begin position="226"/>
        <end position="318"/>
    </location>
</feature>
<feature type="domain" description="Ig-like 4">
    <location>
        <begin position="322"/>
        <end position="410"/>
    </location>
</feature>
<feature type="domain" description="Ig-like 5">
    <location>
        <begin position="418"/>
        <end position="502"/>
    </location>
</feature>
<feature type="domain" description="Fibronectin type-III 1" evidence="5">
    <location>
        <begin position="507"/>
        <end position="611"/>
    </location>
</feature>
<feature type="domain" description="Fibronectin type-III 2" evidence="5">
    <location>
        <begin position="623"/>
        <end position="718"/>
    </location>
</feature>
<feature type="region of interest" description="Disordered" evidence="6">
    <location>
        <begin position="767"/>
        <end position="807"/>
    </location>
</feature>
<feature type="region of interest" description="Disordered" evidence="6">
    <location>
        <begin position="819"/>
        <end position="842"/>
    </location>
</feature>
<feature type="region of interest" description="Disordered" evidence="6">
    <location>
        <begin position="942"/>
        <end position="974"/>
    </location>
</feature>
<feature type="region of interest" description="Disordered" evidence="6">
    <location>
        <begin position="1016"/>
        <end position="1079"/>
    </location>
</feature>
<feature type="short sequence motif" description="PDZ-binding">
    <location>
        <begin position="1177"/>
        <end position="1179"/>
    </location>
</feature>
<feature type="compositionally biased region" description="Low complexity" evidence="6">
    <location>
        <begin position="785"/>
        <end position="800"/>
    </location>
</feature>
<feature type="compositionally biased region" description="Pro residues" evidence="6">
    <location>
        <begin position="944"/>
        <end position="954"/>
    </location>
</feature>
<feature type="compositionally biased region" description="Polar residues" evidence="6">
    <location>
        <begin position="1020"/>
        <end position="1029"/>
    </location>
</feature>
<feature type="modified residue" description="Phosphoserine" evidence="2">
    <location>
        <position position="809"/>
    </location>
</feature>
<feature type="glycosylation site" description="N-linked (GlcNAc...) asparagine" evidence="3">
    <location>
        <position position="188"/>
    </location>
</feature>
<feature type="glycosylation site" description="N-linked (GlcNAc...) asparagine" evidence="3">
    <location>
        <position position="239"/>
    </location>
</feature>
<feature type="glycosylation site" description="N-linked (GlcNAc...) asparagine" evidence="3">
    <location>
        <position position="256"/>
    </location>
</feature>
<feature type="glycosylation site" description="N-linked (GlcNAc...) asparagine" evidence="3">
    <location>
        <position position="513"/>
    </location>
</feature>
<feature type="glycosylation site" description="N-linked (GlcNAc...) asparagine" evidence="3">
    <location>
        <position position="524"/>
    </location>
</feature>
<feature type="disulfide bond" evidence="4">
    <location>
        <begin position="41"/>
        <end position="108"/>
    </location>
</feature>
<feature type="disulfide bond" evidence="4">
    <location>
        <begin position="158"/>
        <end position="206"/>
    </location>
</feature>
<feature type="disulfide bond" evidence="4">
    <location>
        <begin position="248"/>
        <end position="301"/>
    </location>
</feature>
<feature type="disulfide bond" evidence="4">
    <location>
        <begin position="344"/>
        <end position="395"/>
    </location>
</feature>
<feature type="disulfide bond" evidence="4">
    <location>
        <begin position="440"/>
        <end position="486"/>
    </location>
</feature>
<feature type="splice variant" id="VSP_028408" description="In isoform 2." evidence="10">
    <original>GTSPHVVTNVSVVPLPKGANVSWE</original>
    <variation>EPSVLTEPTMTGYLWLCLSGLHTS</variation>
    <location>
        <begin position="505"/>
        <end position="528"/>
    </location>
</feature>
<feature type="splice variant" id="VSP_028409" description="In isoform 2." evidence="10">
    <location>
        <begin position="529"/>
        <end position="1179"/>
    </location>
</feature>
<feature type="mutagenesis site" description="Loss of interaction with MAGI2 and SHANK1 and loss of function." evidence="8">
    <original>T</original>
    <variation>A</variation>
    <location>
        <position position="1177"/>
    </location>
</feature>
<feature type="sequence conflict" description="In Ref. 4; AAK49447." evidence="11" ref="4">
    <original>H</original>
    <variation>R</variation>
    <location>
        <position position="49"/>
    </location>
</feature>
<feature type="sequence conflict" description="In Ref. 3; AAH24487." evidence="11" ref="3">
    <original>A</original>
    <variation>V</variation>
    <location>
        <position position="1161"/>
    </location>
</feature>
<proteinExistence type="evidence at protein level"/>
<dbReference type="EMBL" id="AC121551">
    <property type="status" value="NOT_ANNOTATED_CDS"/>
    <property type="molecule type" value="Genomic_DNA"/>
</dbReference>
<dbReference type="EMBL" id="BC024487">
    <property type="protein sequence ID" value="AAH24487.1"/>
    <property type="molecule type" value="mRNA"/>
</dbReference>
<dbReference type="EMBL" id="BC034594">
    <property type="protein sequence ID" value="AAH34594.1"/>
    <property type="molecule type" value="mRNA"/>
</dbReference>
<dbReference type="EMBL" id="AF284775">
    <property type="protein sequence ID" value="AAK49447.1"/>
    <property type="molecule type" value="Genomic_DNA"/>
</dbReference>
<dbReference type="CCDS" id="CCDS15515.1">
    <molecule id="Q05BQ1-1"/>
</dbReference>
<dbReference type="RefSeq" id="NP_001139272.1">
    <molecule id="Q05BQ1-1"/>
    <property type="nucleotide sequence ID" value="NM_001145800.1"/>
</dbReference>
<dbReference type="RefSeq" id="NP_291086.2">
    <molecule id="Q05BQ1-1"/>
    <property type="nucleotide sequence ID" value="NM_033608.3"/>
</dbReference>
<dbReference type="RefSeq" id="XP_006497119.1">
    <molecule id="Q05BQ1-1"/>
    <property type="nucleotide sequence ID" value="XM_006497056.5"/>
</dbReference>
<dbReference type="RefSeq" id="XP_030099645.1">
    <molecule id="Q05BQ1-1"/>
    <property type="nucleotide sequence ID" value="XM_030243785.2"/>
</dbReference>
<dbReference type="FunCoup" id="Q05BQ1">
    <property type="interactions" value="49"/>
</dbReference>
<dbReference type="STRING" id="10090.ENSMUSP00000106866"/>
<dbReference type="GlyCosmos" id="Q05BQ1">
    <property type="glycosylation" value="5 sites, No reported glycans"/>
</dbReference>
<dbReference type="GlyGen" id="Q05BQ1">
    <property type="glycosylation" value="8 sites"/>
</dbReference>
<dbReference type="iPTMnet" id="Q05BQ1"/>
<dbReference type="PhosphoSitePlus" id="Q05BQ1"/>
<dbReference type="PaxDb" id="10090-ENSMUSP00000106866"/>
<dbReference type="ProteomicsDB" id="300063">
    <molecule id="Q05BQ1-1"/>
</dbReference>
<dbReference type="ProteomicsDB" id="300064">
    <molecule id="Q05BQ1-2"/>
</dbReference>
<dbReference type="Antibodypedia" id="34263">
    <property type="antibodies" value="83 antibodies from 20 providers"/>
</dbReference>
<dbReference type="DNASU" id="93842"/>
<dbReference type="Ensembl" id="ENSMUST00000052629.13">
    <molecule id="Q05BQ1-1"/>
    <property type="protein sequence ID" value="ENSMUSP00000058275.7"/>
    <property type="gene ID" value="ENSMUSG00000037995.16"/>
</dbReference>
<dbReference type="Ensembl" id="ENSMUST00000111235.8">
    <molecule id="Q05BQ1-1"/>
    <property type="protein sequence ID" value="ENSMUSP00000106866.3"/>
    <property type="gene ID" value="ENSMUSG00000037995.16"/>
</dbReference>
<dbReference type="Ensembl" id="ENSMUST00000127482.8">
    <molecule id="Q05BQ1-2"/>
    <property type="protein sequence ID" value="ENSMUSP00000117854.2"/>
    <property type="gene ID" value="ENSMUSG00000037995.16"/>
</dbReference>
<dbReference type="GeneID" id="93842"/>
<dbReference type="KEGG" id="mmu:93842"/>
<dbReference type="UCSC" id="uc007dqn.2">
    <molecule id="Q05BQ1-1"/>
    <property type="organism name" value="mouse"/>
</dbReference>
<dbReference type="AGR" id="MGI:2135283"/>
<dbReference type="CTD" id="57549"/>
<dbReference type="MGI" id="MGI:2135283">
    <property type="gene designation" value="Igsf9"/>
</dbReference>
<dbReference type="VEuPathDB" id="HostDB:ENSMUSG00000037995"/>
<dbReference type="eggNOG" id="KOG3510">
    <property type="taxonomic scope" value="Eukaryota"/>
</dbReference>
<dbReference type="GeneTree" id="ENSGT00940000160444"/>
<dbReference type="HOGENOM" id="CLU_008130_2_0_1"/>
<dbReference type="InParanoid" id="Q05BQ1"/>
<dbReference type="OMA" id="FVMGPNV"/>
<dbReference type="OrthoDB" id="6234674at2759"/>
<dbReference type="PhylomeDB" id="Q05BQ1"/>
<dbReference type="TreeFam" id="TF326128"/>
<dbReference type="BioGRID-ORCS" id="93842">
    <property type="hits" value="1 hit in 80 CRISPR screens"/>
</dbReference>
<dbReference type="ChiTaRS" id="Igsf9">
    <property type="organism name" value="mouse"/>
</dbReference>
<dbReference type="PRO" id="PR:Q05BQ1"/>
<dbReference type="Proteomes" id="UP000000589">
    <property type="component" value="Chromosome 1"/>
</dbReference>
<dbReference type="RNAct" id="Q05BQ1">
    <property type="molecule type" value="protein"/>
</dbReference>
<dbReference type="Bgee" id="ENSMUSG00000037995">
    <property type="expression patterns" value="Expressed in dorsal pancreas and 170 other cell types or tissues"/>
</dbReference>
<dbReference type="ExpressionAtlas" id="Q05BQ1">
    <property type="expression patterns" value="baseline and differential"/>
</dbReference>
<dbReference type="GO" id="GO:0030424">
    <property type="term" value="C:axon"/>
    <property type="evidence" value="ECO:0000314"/>
    <property type="project" value="MGI"/>
</dbReference>
<dbReference type="GO" id="GO:0030425">
    <property type="term" value="C:dendrite"/>
    <property type="evidence" value="ECO:0000315"/>
    <property type="project" value="MGI"/>
</dbReference>
<dbReference type="GO" id="GO:0098978">
    <property type="term" value="C:glutamatergic synapse"/>
    <property type="evidence" value="ECO:0007669"/>
    <property type="project" value="Ensembl"/>
</dbReference>
<dbReference type="GO" id="GO:0060077">
    <property type="term" value="C:inhibitory synapse"/>
    <property type="evidence" value="ECO:0000314"/>
    <property type="project" value="MGI"/>
</dbReference>
<dbReference type="GO" id="GO:0098839">
    <property type="term" value="C:postsynaptic density membrane"/>
    <property type="evidence" value="ECO:0007669"/>
    <property type="project" value="Ensembl"/>
</dbReference>
<dbReference type="GO" id="GO:0098632">
    <property type="term" value="F:cell-cell adhesion mediator activity"/>
    <property type="evidence" value="ECO:0000314"/>
    <property type="project" value="MGI"/>
</dbReference>
<dbReference type="GO" id="GO:0016358">
    <property type="term" value="P:dendrite development"/>
    <property type="evidence" value="ECO:0000315"/>
    <property type="project" value="MGI"/>
</dbReference>
<dbReference type="GO" id="GO:0007156">
    <property type="term" value="P:homophilic cell adhesion via plasma membrane adhesion molecules"/>
    <property type="evidence" value="ECO:0000314"/>
    <property type="project" value="MGI"/>
</dbReference>
<dbReference type="GO" id="GO:0090128">
    <property type="term" value="P:regulation of synapse maturation"/>
    <property type="evidence" value="ECO:0007669"/>
    <property type="project" value="Ensembl"/>
</dbReference>
<dbReference type="GO" id="GO:0050807">
    <property type="term" value="P:regulation of synapse organization"/>
    <property type="evidence" value="ECO:0000315"/>
    <property type="project" value="MGI"/>
</dbReference>
<dbReference type="CDD" id="cd00063">
    <property type="entry name" value="FN3"/>
    <property type="match status" value="2"/>
</dbReference>
<dbReference type="FunFam" id="2.60.40.10:FF:000272">
    <property type="entry name" value="Immunoglobulin superfamily member 9B"/>
    <property type="match status" value="1"/>
</dbReference>
<dbReference type="FunFam" id="2.60.40.10:FF:000323">
    <property type="entry name" value="Immunoglobulin superfamily member 9B"/>
    <property type="match status" value="1"/>
</dbReference>
<dbReference type="FunFam" id="2.60.40.10:FF:000389">
    <property type="entry name" value="Immunoglobulin superfamily member 9B"/>
    <property type="match status" value="1"/>
</dbReference>
<dbReference type="FunFam" id="2.60.40.10:FF:001243">
    <property type="entry name" value="Protein turtle homolog A"/>
    <property type="match status" value="1"/>
</dbReference>
<dbReference type="FunFam" id="2.60.40.10:FF:000226">
    <property type="entry name" value="protein turtle homolog B"/>
    <property type="match status" value="1"/>
</dbReference>
<dbReference type="FunFam" id="2.60.40.10:FF:000245">
    <property type="entry name" value="protein turtle homolog B isoform X2"/>
    <property type="match status" value="1"/>
</dbReference>
<dbReference type="FunFam" id="2.60.40.10:FF:000321">
    <property type="entry name" value="protein turtle homolog B isoform X2"/>
    <property type="match status" value="1"/>
</dbReference>
<dbReference type="Gene3D" id="2.60.40.10">
    <property type="entry name" value="Immunoglobulins"/>
    <property type="match status" value="7"/>
</dbReference>
<dbReference type="InterPro" id="IPR003961">
    <property type="entry name" value="FN3_dom"/>
</dbReference>
<dbReference type="InterPro" id="IPR036116">
    <property type="entry name" value="FN3_sf"/>
</dbReference>
<dbReference type="InterPro" id="IPR007110">
    <property type="entry name" value="Ig-like_dom"/>
</dbReference>
<dbReference type="InterPro" id="IPR036179">
    <property type="entry name" value="Ig-like_dom_sf"/>
</dbReference>
<dbReference type="InterPro" id="IPR013783">
    <property type="entry name" value="Ig-like_fold"/>
</dbReference>
<dbReference type="InterPro" id="IPR013098">
    <property type="entry name" value="Ig_I-set"/>
</dbReference>
<dbReference type="InterPro" id="IPR003599">
    <property type="entry name" value="Ig_sub"/>
</dbReference>
<dbReference type="InterPro" id="IPR003598">
    <property type="entry name" value="Ig_sub2"/>
</dbReference>
<dbReference type="InterPro" id="IPR051170">
    <property type="entry name" value="Neural/epithelial_adhesion"/>
</dbReference>
<dbReference type="PANTHER" id="PTHR12231">
    <property type="entry name" value="CTX-RELATED TYPE I TRANSMEMBRANE PROTEIN"/>
    <property type="match status" value="1"/>
</dbReference>
<dbReference type="PANTHER" id="PTHR12231:SF244">
    <property type="entry name" value="PROTEIN TURTLE HOMOLOG A"/>
    <property type="match status" value="1"/>
</dbReference>
<dbReference type="Pfam" id="PF00041">
    <property type="entry name" value="fn3"/>
    <property type="match status" value="2"/>
</dbReference>
<dbReference type="Pfam" id="PF07679">
    <property type="entry name" value="I-set"/>
    <property type="match status" value="1"/>
</dbReference>
<dbReference type="Pfam" id="PF13927">
    <property type="entry name" value="Ig_3"/>
    <property type="match status" value="2"/>
</dbReference>
<dbReference type="SMART" id="SM00060">
    <property type="entry name" value="FN3"/>
    <property type="match status" value="2"/>
</dbReference>
<dbReference type="SMART" id="SM00409">
    <property type="entry name" value="IG"/>
    <property type="match status" value="5"/>
</dbReference>
<dbReference type="SMART" id="SM00408">
    <property type="entry name" value="IGc2"/>
    <property type="match status" value="4"/>
</dbReference>
<dbReference type="SUPFAM" id="SSF49265">
    <property type="entry name" value="Fibronectin type III"/>
    <property type="match status" value="1"/>
</dbReference>
<dbReference type="SUPFAM" id="SSF48726">
    <property type="entry name" value="Immunoglobulin"/>
    <property type="match status" value="5"/>
</dbReference>
<dbReference type="PROSITE" id="PS50853">
    <property type="entry name" value="FN3"/>
    <property type="match status" value="2"/>
</dbReference>
<dbReference type="PROSITE" id="PS50835">
    <property type="entry name" value="IG_LIKE"/>
    <property type="match status" value="5"/>
</dbReference>
<organism>
    <name type="scientific">Mus musculus</name>
    <name type="common">Mouse</name>
    <dbReference type="NCBI Taxonomy" id="10090"/>
    <lineage>
        <taxon>Eukaryota</taxon>
        <taxon>Metazoa</taxon>
        <taxon>Chordata</taxon>
        <taxon>Craniata</taxon>
        <taxon>Vertebrata</taxon>
        <taxon>Euteleostomi</taxon>
        <taxon>Mammalia</taxon>
        <taxon>Eutheria</taxon>
        <taxon>Euarchontoglires</taxon>
        <taxon>Glires</taxon>
        <taxon>Rodentia</taxon>
        <taxon>Myomorpha</taxon>
        <taxon>Muroidea</taxon>
        <taxon>Muridae</taxon>
        <taxon>Murinae</taxon>
        <taxon>Mus</taxon>
        <taxon>Mus</taxon>
    </lineage>
</organism>
<sequence>MIWCLRLTVLSLIISQGADGRRKPEVVSVVGRAGESAVLGCDLLPPAGHPPLHVIEWLRFGFLLPIFIQFGLYSPRIDPDYVGRVRLQTGASLQIEGLRVEDQGWYECRVLFLDQHSPEQDFANGSWVHLTVNSPPQFQETPPLVLEVKELEAVTLRCVARGSPQPYVTWKFRGQDLGKGQGQVQVQNGTLWIRRVERGSAGDYTCQASSSEGSITHATQLLVLGPPVIVVPPSNSTVNSSQDVSLACRAEAYPANLTYSWFQDGVNVFHISRLQSRVRILVDGSLWLQATQPDDAGHYTCVPSNGFLHPPSASAYLTVLYPAQVTVMPPETPLPTGMRGVIRCPVRANPPLLFVTWTKDGQALQLDKFPGWSLGPEGSLIIALGNENALGEYSCTPYNSLGTAGPSPVTQVLLKAPPAFIDQPKEEYFQEVGRELLIPCSARGDPPPIVSWAKVGRGLQGQAQVDSNNSLVLRPLTKEAQGRWECSASNAVARVTTSTNVYVLGTSPHVVTNVSVVPLPKGANVSWEPGFDGGYLQRFSVWYTPLAKRPDRAHHDWVSLAVPIGATHLLVPGLQAHAQYQFSVLAQNKLGSGPFSEIVLSIPEGLPTTPAAPGLPPTEIPPPLSPPRGLVAVRTPRGVLLHWDPPELIPGRLDGYILEGRQGSQGWEILDQGVAGTEIQLLVPGLIKDVLYEFRLVAFADSYVSDPSNVANISTSGLEVYPSRTQLPGLLPQPVLAGVVGGVCFLGVAVLVSILAACLMNRRRAARRHRKRLRQDPPLIFSPRGKSGSHSAPGSGSPDSVTKFKLQGSPVPSLRQSLLWGEPARPPSPHPDSPLGRGPLPLEPICRGPDGRFVMGPTVAPSQEKLCLERSEPRTSAKRLAQSFDCSSSSPSGVPQPLCITDISPVGQPLAAVPSPLPGPGPLLQYLSLPFFREMNVDGDWPPLEEPTPAPPPDFMDSQPCPTSSFLPPPDSPPANLRAVLPGTLMGVGVSSEPPYTALADWTLRERVLPGLLSAAPRGSLTSQSSGRGSASFLRPPSTAPSAGGSYLSPAPGDTSSWASGPERWPRREHVVTVSKRRNTSVDENYEWDSEFPGDMELLETWHPGLASSRTHPELEPELGVKTPEESCLLNPTHAAGPEARCAALREEFLAFRRRRDATRARLPAYQQSISYPEQATLL</sequence>
<comment type="function">
    <text evidence="8 9">Functions in dendrite outgrowth and synapse maturation.</text>
</comment>
<comment type="subunit">
    <text evidence="8">Interacts with MAGI2 and SHANK1.</text>
</comment>
<comment type="subcellular location">
    <subcellularLocation>
        <location evidence="1">Cell membrane</location>
        <topology evidence="1">Single-pass type I membrane protein</topology>
    </subcellularLocation>
    <subcellularLocation>
        <location evidence="1">Synapse</location>
    </subcellularLocation>
    <text evidence="1">Enriched at the excitatory synapses in mature neurons.</text>
</comment>
<comment type="alternative products">
    <event type="alternative splicing"/>
    <isoform>
        <id>Q05BQ1-1</id>
        <name>1</name>
        <sequence type="displayed"/>
    </isoform>
    <isoform>
        <id>Q05BQ1-2</id>
        <name>2</name>
        <sequence type="described" ref="VSP_028408 VSP_028409"/>
    </isoform>
</comment>
<comment type="tissue specificity">
    <text evidence="9">Expressed in both cell bodies and dendrites of cortical and hippocampal neurons and also cerebellar Purkinje cells (at protein level).</text>
</comment>
<comment type="developmental stage">
    <text evidence="7 9">Detected in brain during embryonic development at least from 7.5 dpc until 16.5 dpc. Mainly expressed within the dorsal root glanglia, trigeminal glanglia and olfactory epithelium of 10.5 dpc embryos. Expressed to a lower extent in neuroepithelium, retina and hindgut.</text>
</comment>
<comment type="domain">
    <text>The PDZ-binding motif mediates interactions with MAGI2 and SHANK1.</text>
</comment>
<comment type="similarity">
    <text evidence="11">Belongs to the immunoglobulin superfamily. Turtle family.</text>
</comment>
<reference key="1">
    <citation type="journal article" date="2002" name="Genomics">
        <title>Cloning and characterization of Igsf9 in mouse and human: a new member of the immunoglobulin superfamily expressed in the developing nervous system.</title>
        <authorList>
            <person name="Doudney K."/>
            <person name="Murdoch J.N."/>
            <person name="Braybrook C."/>
            <person name="Paternotte C."/>
            <person name="Bentley L."/>
            <person name="Copp A.J."/>
            <person name="Stanier P."/>
        </authorList>
    </citation>
    <scope>NUCLEOTIDE SEQUENCE [MRNA] (ISOFORM 1)</scope>
    <scope>DEVELOPMENTAL STAGE</scope>
</reference>
<reference key="2">
    <citation type="journal article" date="2009" name="PLoS Biol.">
        <title>Lineage-specific biology revealed by a finished genome assembly of the mouse.</title>
        <authorList>
            <person name="Church D.M."/>
            <person name="Goodstadt L."/>
            <person name="Hillier L.W."/>
            <person name="Zody M.C."/>
            <person name="Goldstein S."/>
            <person name="She X."/>
            <person name="Bult C.J."/>
            <person name="Agarwala R."/>
            <person name="Cherry J.L."/>
            <person name="DiCuccio M."/>
            <person name="Hlavina W."/>
            <person name="Kapustin Y."/>
            <person name="Meric P."/>
            <person name="Maglott D."/>
            <person name="Birtle Z."/>
            <person name="Marques A.C."/>
            <person name="Graves T."/>
            <person name="Zhou S."/>
            <person name="Teague B."/>
            <person name="Potamousis K."/>
            <person name="Churas C."/>
            <person name="Place M."/>
            <person name="Herschleb J."/>
            <person name="Runnheim R."/>
            <person name="Forrest D."/>
            <person name="Amos-Landgraf J."/>
            <person name="Schwartz D.C."/>
            <person name="Cheng Z."/>
            <person name="Lindblad-Toh K."/>
            <person name="Eichler E.E."/>
            <person name="Ponting C.P."/>
        </authorList>
    </citation>
    <scope>NUCLEOTIDE SEQUENCE [LARGE SCALE GENOMIC DNA]</scope>
    <source>
        <strain>C57BL/6J</strain>
    </source>
</reference>
<reference key="3">
    <citation type="journal article" date="2004" name="Genome Res.">
        <title>The status, quality, and expansion of the NIH full-length cDNA project: the Mammalian Gene Collection (MGC).</title>
        <authorList>
            <consortium name="The MGC Project Team"/>
        </authorList>
    </citation>
    <scope>NUCLEOTIDE SEQUENCE [LARGE SCALE MRNA] (ISOFORM 2)</scope>
    <scope>NUCLEOTIDE SEQUENCE [LARGE SCALE MRNA] OF 970-1179 (ISOFORM 1)</scope>
    <source>
        <strain>FVB/N</strain>
        <tissue>Colon</tissue>
        <tissue>Eye</tissue>
    </source>
</reference>
<reference key="4">
    <citation type="journal article" date="2001" name="Genomics">
        <title>Comparative physical and transcript maps of approximately 1 Mb around loop-tail, a gene for severe neural tube defects on distal mouse chromosome 1 and human chromosome 1q22-q23.</title>
        <authorList>
            <person name="Doudney K."/>
            <person name="Murdoch J.N."/>
            <person name="Paternotte C."/>
            <person name="Bentley L."/>
            <person name="Gregory S."/>
            <person name="Copp A.J."/>
            <person name="Stanier P."/>
        </authorList>
    </citation>
    <scope>NUCLEOTIDE SEQUENCE [GENOMIC DNA] OF 21-83</scope>
    <source>
        <strain>129S6/SvEvTac</strain>
    </source>
</reference>
<reference key="5">
    <citation type="journal article" date="2004" name="Proc. Natl. Acad. Sci. U.S.A.">
        <title>Control of dendrite arborization by an Ig family member, dendrite arborization and synapse maturation 1 (Dasm1).</title>
        <authorList>
            <person name="Shi S.-H."/>
            <person name="Cox D.N."/>
            <person name="Wang D."/>
            <person name="Jan L.Y."/>
            <person name="Jan Y.-N."/>
        </authorList>
    </citation>
    <scope>FUNCTION</scope>
    <scope>TISSUE SPECIFICITY</scope>
    <scope>DEVELOPMENTAL STAGE</scope>
</reference>
<reference key="6">
    <citation type="journal article" date="2004" name="Proc. Natl. Acad. Sci. U.S.A.">
        <title>The immunoglobulin family member dendrite arborization and synapse maturation 1 (Dasm1) controls excitatory synapse maturation.</title>
        <authorList>
            <person name="Shi S.-H."/>
            <person name="Cheng T."/>
            <person name="Jan L.Y."/>
            <person name="Jan Y.-N."/>
        </authorList>
    </citation>
    <scope>FUNCTION</scope>
    <scope>INTERACTION WITH MAGI2 AND SHANK1</scope>
    <scope>MUTAGENESIS OF THR-1177</scope>
</reference>